<protein>
    <recommendedName>
        <fullName evidence="1">Acetylglutamate kinase</fullName>
        <ecNumber evidence="1">2.7.2.8</ecNumber>
    </recommendedName>
    <alternativeName>
        <fullName evidence="1">N-acetyl-L-glutamate 5-phosphotransferase</fullName>
    </alternativeName>
    <alternativeName>
        <fullName evidence="1">NAG kinase</fullName>
        <shortName evidence="1">NAGK</shortName>
    </alternativeName>
</protein>
<sequence length="258" mass="27190">MMNPLIIKLGGVLLDSEEALERLFSALVNYRESHQRQLVIVHGGGCVVDELMKGLNLPVKKKNGLRVTPADQIDIITGALAGTANKTLLAWAKKHQIAAVGLFLGDGDSVKVTQLDEELGHVGLAQPGSPKLINSLLENGYLPVVSSIGVTNEGQLMNVNADQAATALAATLGADLILLSDVSGILDGKGQRIAEMTAAKAEQLIEQGIITDGMIVKVNAALDAARTLGRPVDIASWRHAEQLPALFNGMPMGTRILA</sequence>
<organism>
    <name type="scientific">Escherichia coli O6:H1 (strain CFT073 / ATCC 700928 / UPEC)</name>
    <dbReference type="NCBI Taxonomy" id="199310"/>
    <lineage>
        <taxon>Bacteria</taxon>
        <taxon>Pseudomonadati</taxon>
        <taxon>Pseudomonadota</taxon>
        <taxon>Gammaproteobacteria</taxon>
        <taxon>Enterobacterales</taxon>
        <taxon>Enterobacteriaceae</taxon>
        <taxon>Escherichia</taxon>
    </lineage>
</organism>
<dbReference type="EC" id="2.7.2.8" evidence="1"/>
<dbReference type="EMBL" id="AE014075">
    <property type="protein sequence ID" value="AAN83346.1"/>
    <property type="status" value="ALT_INIT"/>
    <property type="molecule type" value="Genomic_DNA"/>
</dbReference>
<dbReference type="SMR" id="P59298"/>
<dbReference type="STRING" id="199310.c4918"/>
<dbReference type="KEGG" id="ecc:c4918"/>
<dbReference type="eggNOG" id="COG0548">
    <property type="taxonomic scope" value="Bacteria"/>
</dbReference>
<dbReference type="HOGENOM" id="CLU_053680_1_1_6"/>
<dbReference type="UniPathway" id="UPA00068">
    <property type="reaction ID" value="UER00107"/>
</dbReference>
<dbReference type="Proteomes" id="UP000001410">
    <property type="component" value="Chromosome"/>
</dbReference>
<dbReference type="GO" id="GO:0005737">
    <property type="term" value="C:cytoplasm"/>
    <property type="evidence" value="ECO:0007669"/>
    <property type="project" value="UniProtKB-SubCell"/>
</dbReference>
<dbReference type="GO" id="GO:0003991">
    <property type="term" value="F:acetylglutamate kinase activity"/>
    <property type="evidence" value="ECO:0007669"/>
    <property type="project" value="UniProtKB-UniRule"/>
</dbReference>
<dbReference type="GO" id="GO:0005524">
    <property type="term" value="F:ATP binding"/>
    <property type="evidence" value="ECO:0007669"/>
    <property type="project" value="UniProtKB-UniRule"/>
</dbReference>
<dbReference type="GO" id="GO:0042450">
    <property type="term" value="P:arginine biosynthetic process via ornithine"/>
    <property type="evidence" value="ECO:0007669"/>
    <property type="project" value="UniProtKB-UniRule"/>
</dbReference>
<dbReference type="GO" id="GO:0006526">
    <property type="term" value="P:L-arginine biosynthetic process"/>
    <property type="evidence" value="ECO:0007669"/>
    <property type="project" value="UniProtKB-UniPathway"/>
</dbReference>
<dbReference type="CDD" id="cd04249">
    <property type="entry name" value="AAK_NAGK-NC"/>
    <property type="match status" value="1"/>
</dbReference>
<dbReference type="FunFam" id="3.40.1160.10:FF:000008">
    <property type="entry name" value="Acetylglutamate kinase"/>
    <property type="match status" value="1"/>
</dbReference>
<dbReference type="Gene3D" id="3.40.1160.10">
    <property type="entry name" value="Acetylglutamate kinase-like"/>
    <property type="match status" value="1"/>
</dbReference>
<dbReference type="HAMAP" id="MF_00082">
    <property type="entry name" value="ArgB"/>
    <property type="match status" value="1"/>
</dbReference>
<dbReference type="InterPro" id="IPR036393">
    <property type="entry name" value="AceGlu_kinase-like_sf"/>
</dbReference>
<dbReference type="InterPro" id="IPR004662">
    <property type="entry name" value="AcgluKinase_fam"/>
</dbReference>
<dbReference type="InterPro" id="IPR037528">
    <property type="entry name" value="ArgB"/>
</dbReference>
<dbReference type="InterPro" id="IPR001048">
    <property type="entry name" value="Asp/Glu/Uridylate_kinase"/>
</dbReference>
<dbReference type="InterPro" id="IPR041731">
    <property type="entry name" value="NAGK-NC"/>
</dbReference>
<dbReference type="NCBIfam" id="TIGR00761">
    <property type="entry name" value="argB"/>
    <property type="match status" value="1"/>
</dbReference>
<dbReference type="PANTHER" id="PTHR23342">
    <property type="entry name" value="N-ACETYLGLUTAMATE SYNTHASE"/>
    <property type="match status" value="1"/>
</dbReference>
<dbReference type="PANTHER" id="PTHR23342:SF0">
    <property type="entry name" value="N-ACETYLGLUTAMATE SYNTHASE, MITOCHONDRIAL"/>
    <property type="match status" value="1"/>
</dbReference>
<dbReference type="Pfam" id="PF00696">
    <property type="entry name" value="AA_kinase"/>
    <property type="match status" value="1"/>
</dbReference>
<dbReference type="PIRSF" id="PIRSF000728">
    <property type="entry name" value="NAGK"/>
    <property type="match status" value="1"/>
</dbReference>
<dbReference type="SUPFAM" id="SSF53633">
    <property type="entry name" value="Carbamate kinase-like"/>
    <property type="match status" value="1"/>
</dbReference>
<comment type="function">
    <text evidence="1">Catalyzes the ATP-dependent phosphorylation of N-acetyl-L-glutamate.</text>
</comment>
<comment type="catalytic activity">
    <reaction evidence="1">
        <text>N-acetyl-L-glutamate + ATP = N-acetyl-L-glutamyl 5-phosphate + ADP</text>
        <dbReference type="Rhea" id="RHEA:14629"/>
        <dbReference type="ChEBI" id="CHEBI:30616"/>
        <dbReference type="ChEBI" id="CHEBI:44337"/>
        <dbReference type="ChEBI" id="CHEBI:57936"/>
        <dbReference type="ChEBI" id="CHEBI:456216"/>
        <dbReference type="EC" id="2.7.2.8"/>
    </reaction>
</comment>
<comment type="pathway">
    <text evidence="1">Amino-acid biosynthesis; L-arginine biosynthesis; N(2)-acetyl-L-ornithine from L-glutamate: step 2/4.</text>
</comment>
<comment type="subunit">
    <text evidence="1">Homodimer.</text>
</comment>
<comment type="subcellular location">
    <subcellularLocation>
        <location evidence="1">Cytoplasm</location>
    </subcellularLocation>
</comment>
<comment type="similarity">
    <text evidence="1">Belongs to the acetylglutamate kinase family. ArgB subfamily.</text>
</comment>
<comment type="sequence caution" evidence="2">
    <conflict type="erroneous initiation">
        <sequence resource="EMBL-CDS" id="AAN83346"/>
    </conflict>
</comment>
<proteinExistence type="inferred from homology"/>
<name>ARGB_ECOL6</name>
<reference key="1">
    <citation type="journal article" date="2002" name="Proc. Natl. Acad. Sci. U.S.A.">
        <title>Extensive mosaic structure revealed by the complete genome sequence of uropathogenic Escherichia coli.</title>
        <authorList>
            <person name="Welch R.A."/>
            <person name="Burland V."/>
            <person name="Plunkett G. III"/>
            <person name="Redford P."/>
            <person name="Roesch P."/>
            <person name="Rasko D."/>
            <person name="Buckles E.L."/>
            <person name="Liou S.-R."/>
            <person name="Boutin A."/>
            <person name="Hackett J."/>
            <person name="Stroud D."/>
            <person name="Mayhew G.F."/>
            <person name="Rose D.J."/>
            <person name="Zhou S."/>
            <person name="Schwartz D.C."/>
            <person name="Perna N.T."/>
            <person name="Mobley H.L.T."/>
            <person name="Donnenberg M.S."/>
            <person name="Blattner F.R."/>
        </authorList>
    </citation>
    <scope>NUCLEOTIDE SEQUENCE [LARGE SCALE GENOMIC DNA]</scope>
    <source>
        <strain>CFT073 / ATCC 700928 / UPEC</strain>
    </source>
</reference>
<accession>P59298</accession>
<feature type="chain" id="PRO_0000112616" description="Acetylglutamate kinase">
    <location>
        <begin position="1"/>
        <end position="258"/>
    </location>
</feature>
<feature type="binding site" evidence="1">
    <location>
        <begin position="44"/>
        <end position="45"/>
    </location>
    <ligand>
        <name>substrate</name>
    </ligand>
</feature>
<feature type="binding site" evidence="1">
    <location>
        <position position="66"/>
    </location>
    <ligand>
        <name>substrate</name>
    </ligand>
</feature>
<feature type="binding site" evidence="1">
    <location>
        <position position="158"/>
    </location>
    <ligand>
        <name>substrate</name>
    </ligand>
</feature>
<feature type="binding site" evidence="1">
    <location>
        <begin position="181"/>
        <end position="186"/>
    </location>
    <ligand>
        <name>ATP</name>
        <dbReference type="ChEBI" id="CHEBI:30616"/>
    </ligand>
</feature>
<feature type="binding site" evidence="1">
    <location>
        <begin position="209"/>
        <end position="211"/>
    </location>
    <ligand>
        <name>ATP</name>
        <dbReference type="ChEBI" id="CHEBI:30616"/>
    </ligand>
</feature>
<feature type="site" description="Transition state stabilizer" evidence="1">
    <location>
        <position position="8"/>
    </location>
</feature>
<feature type="site" description="Transition state stabilizer" evidence="1">
    <location>
        <position position="217"/>
    </location>
</feature>
<gene>
    <name evidence="1" type="primary">argB</name>
    <name type="ordered locus">c4918</name>
</gene>
<evidence type="ECO:0000255" key="1">
    <source>
        <dbReference type="HAMAP-Rule" id="MF_00082"/>
    </source>
</evidence>
<evidence type="ECO:0000305" key="2"/>
<keyword id="KW-0028">Amino-acid biosynthesis</keyword>
<keyword id="KW-0055">Arginine biosynthesis</keyword>
<keyword id="KW-0067">ATP-binding</keyword>
<keyword id="KW-0963">Cytoplasm</keyword>
<keyword id="KW-0418">Kinase</keyword>
<keyword id="KW-0547">Nucleotide-binding</keyword>
<keyword id="KW-1185">Reference proteome</keyword>
<keyword id="KW-0808">Transferase</keyword>